<comment type="function">
    <text>Core component of nucleosome. Nucleosomes wrap and compact DNA into chromatin, limiting DNA accessibility to the cellular machineries which require DNA as a template. Histones thereby play a central role in transcription regulation, DNA repair, DNA replication and chromosomal stability. DNA accessibility is regulated via a complex set of post-translational modifications of histones, also called histone code, and nucleosome remodeling.</text>
</comment>
<comment type="subunit">
    <text>The nucleosome is a histone octamer containing two molecules each of H2A, H2B, H3 and H4 assembled in one H3-H4 heterotetramer and two H2A-H2B heterodimers. The octamer wraps approximately 147 bp of DNA.</text>
</comment>
<comment type="subcellular location">
    <subcellularLocation>
        <location>Nucleus</location>
    </subcellularLocation>
    <subcellularLocation>
        <location>Chromosome</location>
    </subcellularLocation>
</comment>
<comment type="PTM">
    <text evidence="1">Monoubiquitination of Lys-118 gives a specific tag for epigenetic transcriptional activation and is also prerequisite for histone H3 'Lys-4' and 'Lys-79' methylation.</text>
</comment>
<comment type="PTM">
    <text evidence="1">GlcNAcylation at Ser-110 promotes monoubiquitination of Lys-118. It fluctuates in response to extracellular glucose, and associates with transcribed genes (By similarity).</text>
</comment>
<comment type="similarity">
    <text evidence="3">Belongs to the histone H2B family.</text>
</comment>
<reference key="1">
    <citation type="journal article" date="1980" name="Nucleic Acids Res.">
        <title>Ubiquitous and gene-specific regulatory 5' sequences in a sea urchin histone DNA clone coding for histone protein variants.</title>
        <authorList>
            <person name="Busslinger M."/>
            <person name="Portmann R."/>
            <person name="Irminger J.C."/>
            <person name="Birnstiel M.L."/>
        </authorList>
    </citation>
    <scope>PRELIMINARY NUCLEOTIDE SEQUENCE OF 1-21</scope>
</reference>
<reference key="2">
    <citation type="journal article" date="1978" name="Cell">
        <title>Genes and spacers of cloned sea urchin histone DNA analyzed by sequencing.</title>
        <authorList>
            <person name="Schaffner W."/>
            <person name="Kunz G."/>
            <person name="Daetwyler H."/>
            <person name="Telford J."/>
            <person name="Smith H.O."/>
            <person name="Birnstiel M.L."/>
        </authorList>
    </citation>
    <scope>NUCLEOTIDE SEQUENCE [GENOMIC DNA] OF 22-123</scope>
</reference>
<accession>P02287</accession>
<proteinExistence type="inferred from homology"/>
<feature type="initiator methionine" description="Removed" evidence="1">
    <location>
        <position position="1"/>
    </location>
</feature>
<feature type="chain" id="PRO_0000071891" description="Histone H2B.1, embryonic">
    <location>
        <begin position="2"/>
        <end position="123"/>
    </location>
</feature>
<feature type="region of interest" description="Disordered" evidence="2">
    <location>
        <begin position="1"/>
        <end position="32"/>
    </location>
</feature>
<feature type="compositionally biased region" description="Basic residues" evidence="2">
    <location>
        <begin position="10"/>
        <end position="32"/>
    </location>
</feature>
<feature type="glycosylation site" description="O-linked (GlcNAc) serine" evidence="1">
    <location>
        <position position="110"/>
    </location>
</feature>
<feature type="cross-link" description="Glycyl lysine isopeptide (Lys-Gly) (interchain with G-Cter in ubiquitin)" evidence="1">
    <location>
        <position position="118"/>
    </location>
</feature>
<sequence>MAPTGQVAKKGSKKAVKPPRASGGKKRHRKRKESYGIYIYKVLKQVHPDTGVSSRAMTIMNSFVNDIFERIAGEASRLTQYNKKSTISSREIQTAVRLLLPGELAKHAVSEGTKAVTKYTTAK</sequence>
<dbReference type="EMBL" id="J01178">
    <property type="protein sequence ID" value="AAB59205.1"/>
    <property type="molecule type" value="Genomic_DNA"/>
</dbReference>
<dbReference type="PIR" id="B93719">
    <property type="entry name" value="HSUR2M"/>
</dbReference>
<dbReference type="SMR" id="P02287"/>
<dbReference type="GO" id="GO:0000786">
    <property type="term" value="C:nucleosome"/>
    <property type="evidence" value="ECO:0007669"/>
    <property type="project" value="UniProtKB-KW"/>
</dbReference>
<dbReference type="GO" id="GO:0005634">
    <property type="term" value="C:nucleus"/>
    <property type="evidence" value="ECO:0007669"/>
    <property type="project" value="UniProtKB-SubCell"/>
</dbReference>
<dbReference type="GO" id="GO:0003677">
    <property type="term" value="F:DNA binding"/>
    <property type="evidence" value="ECO:0007669"/>
    <property type="project" value="UniProtKB-KW"/>
</dbReference>
<dbReference type="GO" id="GO:0046982">
    <property type="term" value="F:protein heterodimerization activity"/>
    <property type="evidence" value="ECO:0007669"/>
    <property type="project" value="InterPro"/>
</dbReference>
<dbReference type="GO" id="GO:0030527">
    <property type="term" value="F:structural constituent of chromatin"/>
    <property type="evidence" value="ECO:0007669"/>
    <property type="project" value="InterPro"/>
</dbReference>
<dbReference type="CDD" id="cd22910">
    <property type="entry name" value="HFD_H2B"/>
    <property type="match status" value="1"/>
</dbReference>
<dbReference type="FunFam" id="1.10.20.10:FF:000016">
    <property type="entry name" value="Histone H2B"/>
    <property type="match status" value="1"/>
</dbReference>
<dbReference type="Gene3D" id="1.10.20.10">
    <property type="entry name" value="Histone, subunit A"/>
    <property type="match status" value="1"/>
</dbReference>
<dbReference type="InterPro" id="IPR009072">
    <property type="entry name" value="Histone-fold"/>
</dbReference>
<dbReference type="InterPro" id="IPR007125">
    <property type="entry name" value="Histone_H2A/H2B/H3"/>
</dbReference>
<dbReference type="InterPro" id="IPR000558">
    <property type="entry name" value="Histone_H2B"/>
</dbReference>
<dbReference type="InterPro" id="IPR055333">
    <property type="entry name" value="HISTONE_H2B_site"/>
</dbReference>
<dbReference type="PANTHER" id="PTHR23428">
    <property type="entry name" value="HISTONE H2B"/>
    <property type="match status" value="1"/>
</dbReference>
<dbReference type="Pfam" id="PF00125">
    <property type="entry name" value="Histone"/>
    <property type="match status" value="1"/>
</dbReference>
<dbReference type="PRINTS" id="PR00621">
    <property type="entry name" value="HISTONEH2B"/>
</dbReference>
<dbReference type="SMART" id="SM00427">
    <property type="entry name" value="H2B"/>
    <property type="match status" value="1"/>
</dbReference>
<dbReference type="SUPFAM" id="SSF47113">
    <property type="entry name" value="Histone-fold"/>
    <property type="match status" value="1"/>
</dbReference>
<dbReference type="PROSITE" id="PS00357">
    <property type="entry name" value="HISTONE_H2B"/>
    <property type="match status" value="1"/>
</dbReference>
<evidence type="ECO:0000250" key="1"/>
<evidence type="ECO:0000256" key="2">
    <source>
        <dbReference type="SAM" id="MobiDB-lite"/>
    </source>
</evidence>
<evidence type="ECO:0000305" key="3"/>
<name>H2BE1_PSAMI</name>
<keyword id="KW-0158">Chromosome</keyword>
<keyword id="KW-0238">DNA-binding</keyword>
<keyword id="KW-0325">Glycoprotein</keyword>
<keyword id="KW-1017">Isopeptide bond</keyword>
<keyword id="KW-0544">Nucleosome core</keyword>
<keyword id="KW-0539">Nucleus</keyword>
<keyword id="KW-0832">Ubl conjugation</keyword>
<organism>
    <name type="scientific">Psammechinus miliaris</name>
    <name type="common">Green sea urchin</name>
    <name type="synonym">Echinus miliaris</name>
    <dbReference type="NCBI Taxonomy" id="7660"/>
    <lineage>
        <taxon>Eukaryota</taxon>
        <taxon>Metazoa</taxon>
        <taxon>Echinodermata</taxon>
        <taxon>Eleutherozoa</taxon>
        <taxon>Echinozoa</taxon>
        <taxon>Echinoidea</taxon>
        <taxon>Euechinoidea</taxon>
        <taxon>Echinacea</taxon>
        <taxon>Camarodonta</taxon>
        <taxon>Echinidea</taxon>
        <taxon>Parechinidae</taxon>
        <taxon>Psammechinus</taxon>
    </lineage>
</organism>
<protein>
    <recommendedName>
        <fullName>Histone H2B.1, embryonic</fullName>
    </recommendedName>
</protein>